<dbReference type="EMBL" id="AM236080">
    <property type="protein sequence ID" value="CAK05897.1"/>
    <property type="molecule type" value="Genomic_DNA"/>
</dbReference>
<dbReference type="RefSeq" id="WP_011650199.1">
    <property type="nucleotide sequence ID" value="NC_008380.1"/>
</dbReference>
<dbReference type="SMR" id="Q1MMA5"/>
<dbReference type="EnsemblBacteria" id="CAK05897">
    <property type="protein sequence ID" value="CAK05897"/>
    <property type="gene ID" value="RL0406"/>
</dbReference>
<dbReference type="KEGG" id="rle:RL0406"/>
<dbReference type="eggNOG" id="COG0249">
    <property type="taxonomic scope" value="Bacteria"/>
</dbReference>
<dbReference type="HOGENOM" id="CLU_002472_3_1_5"/>
<dbReference type="Proteomes" id="UP000006575">
    <property type="component" value="Chromosome"/>
</dbReference>
<dbReference type="GO" id="GO:0005829">
    <property type="term" value="C:cytosol"/>
    <property type="evidence" value="ECO:0007669"/>
    <property type="project" value="TreeGrafter"/>
</dbReference>
<dbReference type="GO" id="GO:0005524">
    <property type="term" value="F:ATP binding"/>
    <property type="evidence" value="ECO:0007669"/>
    <property type="project" value="UniProtKB-UniRule"/>
</dbReference>
<dbReference type="GO" id="GO:0140664">
    <property type="term" value="F:ATP-dependent DNA damage sensor activity"/>
    <property type="evidence" value="ECO:0007669"/>
    <property type="project" value="InterPro"/>
</dbReference>
<dbReference type="GO" id="GO:0003684">
    <property type="term" value="F:damaged DNA binding"/>
    <property type="evidence" value="ECO:0007669"/>
    <property type="project" value="UniProtKB-UniRule"/>
</dbReference>
<dbReference type="GO" id="GO:0030983">
    <property type="term" value="F:mismatched DNA binding"/>
    <property type="evidence" value="ECO:0007669"/>
    <property type="project" value="InterPro"/>
</dbReference>
<dbReference type="GO" id="GO:0006298">
    <property type="term" value="P:mismatch repair"/>
    <property type="evidence" value="ECO:0007669"/>
    <property type="project" value="UniProtKB-UniRule"/>
</dbReference>
<dbReference type="CDD" id="cd03284">
    <property type="entry name" value="ABC_MutS1"/>
    <property type="match status" value="1"/>
</dbReference>
<dbReference type="FunFam" id="3.40.1170.10:FF:000001">
    <property type="entry name" value="DNA mismatch repair protein MutS"/>
    <property type="match status" value="1"/>
</dbReference>
<dbReference type="Gene3D" id="1.10.1420.10">
    <property type="match status" value="2"/>
</dbReference>
<dbReference type="Gene3D" id="6.10.140.430">
    <property type="match status" value="1"/>
</dbReference>
<dbReference type="Gene3D" id="3.40.1170.10">
    <property type="entry name" value="DNA repair protein MutS, domain I"/>
    <property type="match status" value="1"/>
</dbReference>
<dbReference type="Gene3D" id="3.30.420.110">
    <property type="entry name" value="MutS, connector domain"/>
    <property type="match status" value="1"/>
</dbReference>
<dbReference type="Gene3D" id="3.40.50.300">
    <property type="entry name" value="P-loop containing nucleotide triphosphate hydrolases"/>
    <property type="match status" value="1"/>
</dbReference>
<dbReference type="HAMAP" id="MF_00096">
    <property type="entry name" value="MutS"/>
    <property type="match status" value="1"/>
</dbReference>
<dbReference type="InterPro" id="IPR005748">
    <property type="entry name" value="DNA_mismatch_repair_MutS"/>
</dbReference>
<dbReference type="InterPro" id="IPR007695">
    <property type="entry name" value="DNA_mismatch_repair_MutS-lik_N"/>
</dbReference>
<dbReference type="InterPro" id="IPR017261">
    <property type="entry name" value="DNA_mismatch_repair_MutS/MSH"/>
</dbReference>
<dbReference type="InterPro" id="IPR000432">
    <property type="entry name" value="DNA_mismatch_repair_MutS_C"/>
</dbReference>
<dbReference type="InterPro" id="IPR007861">
    <property type="entry name" value="DNA_mismatch_repair_MutS_clamp"/>
</dbReference>
<dbReference type="InterPro" id="IPR007696">
    <property type="entry name" value="DNA_mismatch_repair_MutS_core"/>
</dbReference>
<dbReference type="InterPro" id="IPR016151">
    <property type="entry name" value="DNA_mismatch_repair_MutS_N"/>
</dbReference>
<dbReference type="InterPro" id="IPR036187">
    <property type="entry name" value="DNA_mismatch_repair_MutS_sf"/>
</dbReference>
<dbReference type="InterPro" id="IPR007860">
    <property type="entry name" value="DNA_mmatch_repair_MutS_con_dom"/>
</dbReference>
<dbReference type="InterPro" id="IPR045076">
    <property type="entry name" value="MutS"/>
</dbReference>
<dbReference type="InterPro" id="IPR036678">
    <property type="entry name" value="MutS_con_dom_sf"/>
</dbReference>
<dbReference type="InterPro" id="IPR027417">
    <property type="entry name" value="P-loop_NTPase"/>
</dbReference>
<dbReference type="NCBIfam" id="TIGR01070">
    <property type="entry name" value="mutS1"/>
    <property type="match status" value="1"/>
</dbReference>
<dbReference type="NCBIfam" id="NF003810">
    <property type="entry name" value="PRK05399.1"/>
    <property type="match status" value="1"/>
</dbReference>
<dbReference type="PANTHER" id="PTHR11361:SF34">
    <property type="entry name" value="DNA MISMATCH REPAIR PROTEIN MSH1, MITOCHONDRIAL"/>
    <property type="match status" value="1"/>
</dbReference>
<dbReference type="PANTHER" id="PTHR11361">
    <property type="entry name" value="DNA MISMATCH REPAIR PROTEIN MUTS FAMILY MEMBER"/>
    <property type="match status" value="1"/>
</dbReference>
<dbReference type="Pfam" id="PF01624">
    <property type="entry name" value="MutS_I"/>
    <property type="match status" value="1"/>
</dbReference>
<dbReference type="Pfam" id="PF05188">
    <property type="entry name" value="MutS_II"/>
    <property type="match status" value="1"/>
</dbReference>
<dbReference type="Pfam" id="PF05192">
    <property type="entry name" value="MutS_III"/>
    <property type="match status" value="1"/>
</dbReference>
<dbReference type="Pfam" id="PF05190">
    <property type="entry name" value="MutS_IV"/>
    <property type="match status" value="1"/>
</dbReference>
<dbReference type="Pfam" id="PF00488">
    <property type="entry name" value="MutS_V"/>
    <property type="match status" value="1"/>
</dbReference>
<dbReference type="PIRSF" id="PIRSF037677">
    <property type="entry name" value="DNA_mis_repair_Msh6"/>
    <property type="match status" value="1"/>
</dbReference>
<dbReference type="SMART" id="SM00534">
    <property type="entry name" value="MUTSac"/>
    <property type="match status" value="1"/>
</dbReference>
<dbReference type="SMART" id="SM00533">
    <property type="entry name" value="MUTSd"/>
    <property type="match status" value="1"/>
</dbReference>
<dbReference type="SUPFAM" id="SSF55271">
    <property type="entry name" value="DNA repair protein MutS, domain I"/>
    <property type="match status" value="1"/>
</dbReference>
<dbReference type="SUPFAM" id="SSF53150">
    <property type="entry name" value="DNA repair protein MutS, domain II"/>
    <property type="match status" value="1"/>
</dbReference>
<dbReference type="SUPFAM" id="SSF48334">
    <property type="entry name" value="DNA repair protein MutS, domain III"/>
    <property type="match status" value="1"/>
</dbReference>
<dbReference type="SUPFAM" id="SSF52540">
    <property type="entry name" value="P-loop containing nucleoside triphosphate hydrolases"/>
    <property type="match status" value="1"/>
</dbReference>
<dbReference type="PROSITE" id="PS00486">
    <property type="entry name" value="DNA_MISMATCH_REPAIR_2"/>
    <property type="match status" value="1"/>
</dbReference>
<gene>
    <name evidence="1" type="primary">mutS</name>
    <name type="ordered locus">RL0406</name>
</gene>
<reference key="1">
    <citation type="journal article" date="2006" name="Genome Biol.">
        <title>The genome of Rhizobium leguminosarum has recognizable core and accessory components.</title>
        <authorList>
            <person name="Young J.P.W."/>
            <person name="Crossman L.C."/>
            <person name="Johnston A.W.B."/>
            <person name="Thomson N.R."/>
            <person name="Ghazoui Z.F."/>
            <person name="Hull K.H."/>
            <person name="Wexler M."/>
            <person name="Curson A.R.J."/>
            <person name="Todd J.D."/>
            <person name="Poole P.S."/>
            <person name="Mauchline T.H."/>
            <person name="East A.K."/>
            <person name="Quail M.A."/>
            <person name="Churcher C."/>
            <person name="Arrowsmith C."/>
            <person name="Cherevach I."/>
            <person name="Chillingworth T."/>
            <person name="Clarke K."/>
            <person name="Cronin A."/>
            <person name="Davis P."/>
            <person name="Fraser A."/>
            <person name="Hance Z."/>
            <person name="Hauser H."/>
            <person name="Jagels K."/>
            <person name="Moule S."/>
            <person name="Mungall K."/>
            <person name="Norbertczak H."/>
            <person name="Rabbinowitsch E."/>
            <person name="Sanders M."/>
            <person name="Simmonds M."/>
            <person name="Whitehead S."/>
            <person name="Parkhill J."/>
        </authorList>
    </citation>
    <scope>NUCLEOTIDE SEQUENCE [LARGE SCALE GENOMIC DNA]</scope>
    <source>
        <strain>DSM 114642 / LMG 32736 / 3841</strain>
    </source>
</reference>
<comment type="function">
    <text evidence="1">This protein is involved in the repair of mismatches in DNA. It is possible that it carries out the mismatch recognition step. This protein has a weak ATPase activity.</text>
</comment>
<comment type="similarity">
    <text evidence="1">Belongs to the DNA mismatch repair MutS family.</text>
</comment>
<sequence length="908" mass="98323">MNARIDTGNEAFSAAELATAESRASATPMMEQYIEIKANNPDSLLFYRMGDFYELFFEDALEASRALGITLTKRGQHMGQDIPMCGVPVHAADDYLQKLISLGFRVAVCEQIEDPAEAKKRGAKSVVRRDVVRLVTPGTITEEKLLSPSESNYLMALTRIRGSGEALLALAWIDISTGVFRLAETEASRLLADILRIDPRELILPDTIFHDPELKPVFDVLGRTAVPQPSVLFDSASAEGRIARYFGVATLDGFGTFSRAELAAAAAAVAYVEKTQIAERPPLGKPERESAASTLFIDPATRANLELARTLSGDRNGSLLKAIDRTVTGGGARLLAERLMSPLTDPARINARLDSIGFLIDEPLLCGNLRDTLKHVPDMPRALSRLALDRGGPRDLSAIRQGLDAAGGVAVMLGKAVLPEELGQALSELQALPATLEKLLAETLAEELPLLKRDGGFLRDGANAELDEVRALRDQSRRVIAGLQLQYAEETGIRSLKIKHNNVLGYFIEVTAGNASPMTETADAKARFIHRQTMANAMRFTTTELADLESRIANAADQALTIELEAFDRMTAAVVAEAEAIKSGARALAVIDVAAGLALLAEEQAYCRPQVDGSKMFAIESGRHPVVEQALRRQAGGPFVANHCDLSPKTGDRDGAIWLLTGPNMGGKSTFLRQNALISILAQMGSFVPATSAHIGIVDRLFSRVGASDDLARGRSTFMVEMVETAAILNQASDRSLVILDEIGRGTATFDGLSIAWAAVEHLHEANRCRGLFATHFHELTVLSEKLGRLSNATMRVKEWDGDVIFLHEVGPGAADRSYGIQVARLAGLPASVVARARDVLTRLEDADRKNPASQLIDDLPLFQVAVRREETARGASKVEEALKAMSLDDMTPREAMDALYDLKKKLK</sequence>
<feature type="chain" id="PRO_0000335211" description="DNA mismatch repair protein MutS">
    <location>
        <begin position="1"/>
        <end position="908"/>
    </location>
</feature>
<feature type="binding site" evidence="1">
    <location>
        <begin position="662"/>
        <end position="669"/>
    </location>
    <ligand>
        <name>ATP</name>
        <dbReference type="ChEBI" id="CHEBI:30616"/>
    </ligand>
</feature>
<proteinExistence type="inferred from homology"/>
<accession>Q1MMA5</accession>
<organism>
    <name type="scientific">Rhizobium johnstonii (strain DSM 114642 / LMG 32736 / 3841)</name>
    <name type="common">Rhizobium leguminosarum bv. viciae</name>
    <dbReference type="NCBI Taxonomy" id="216596"/>
    <lineage>
        <taxon>Bacteria</taxon>
        <taxon>Pseudomonadati</taxon>
        <taxon>Pseudomonadota</taxon>
        <taxon>Alphaproteobacteria</taxon>
        <taxon>Hyphomicrobiales</taxon>
        <taxon>Rhizobiaceae</taxon>
        <taxon>Rhizobium/Agrobacterium group</taxon>
        <taxon>Rhizobium</taxon>
        <taxon>Rhizobium johnstonii</taxon>
    </lineage>
</organism>
<keyword id="KW-0067">ATP-binding</keyword>
<keyword id="KW-0227">DNA damage</keyword>
<keyword id="KW-0234">DNA repair</keyword>
<keyword id="KW-0238">DNA-binding</keyword>
<keyword id="KW-0547">Nucleotide-binding</keyword>
<evidence type="ECO:0000255" key="1">
    <source>
        <dbReference type="HAMAP-Rule" id="MF_00096"/>
    </source>
</evidence>
<protein>
    <recommendedName>
        <fullName evidence="1">DNA mismatch repair protein MutS</fullName>
    </recommendedName>
</protein>
<name>MUTS_RHIJ3</name>